<sequence length="57" mass="6247">MTILKWALIFFVVSVIVGVLGFTGISAASADVARILFYIFLVIFLVLLILGLTIFRA</sequence>
<evidence type="ECO:0000255" key="1">
    <source>
        <dbReference type="HAMAP-Rule" id="MF_01361"/>
    </source>
</evidence>
<dbReference type="EMBL" id="CP000301">
    <property type="protein sequence ID" value="ABD87909.1"/>
    <property type="molecule type" value="Genomic_DNA"/>
</dbReference>
<dbReference type="STRING" id="316056.RPC_2356"/>
<dbReference type="KEGG" id="rpc:RPC_2356"/>
<dbReference type="eggNOG" id="COG5487">
    <property type="taxonomic scope" value="Bacteria"/>
</dbReference>
<dbReference type="HOGENOM" id="CLU_187346_1_0_5"/>
<dbReference type="OrthoDB" id="8021162at2"/>
<dbReference type="GO" id="GO:0005886">
    <property type="term" value="C:plasma membrane"/>
    <property type="evidence" value="ECO:0007669"/>
    <property type="project" value="UniProtKB-SubCell"/>
</dbReference>
<dbReference type="HAMAP" id="MF_01361">
    <property type="entry name" value="UPF0391"/>
    <property type="match status" value="1"/>
</dbReference>
<dbReference type="InterPro" id="IPR009760">
    <property type="entry name" value="DUF1328"/>
</dbReference>
<dbReference type="NCBIfam" id="NF010232">
    <property type="entry name" value="PRK13682.2-2"/>
    <property type="match status" value="1"/>
</dbReference>
<dbReference type="NCBIfam" id="NF010234">
    <property type="entry name" value="PRK13682.2-5"/>
    <property type="match status" value="1"/>
</dbReference>
<dbReference type="Pfam" id="PF07043">
    <property type="entry name" value="DUF1328"/>
    <property type="match status" value="1"/>
</dbReference>
<dbReference type="PIRSF" id="PIRSF036466">
    <property type="entry name" value="UCP036466"/>
    <property type="match status" value="1"/>
</dbReference>
<reference key="1">
    <citation type="submission" date="2006-03" db="EMBL/GenBank/DDBJ databases">
        <title>Complete sequence of Rhodopseudomonas palustris BisB18.</title>
        <authorList>
            <consortium name="US DOE Joint Genome Institute"/>
            <person name="Copeland A."/>
            <person name="Lucas S."/>
            <person name="Lapidus A."/>
            <person name="Barry K."/>
            <person name="Detter J.C."/>
            <person name="Glavina del Rio T."/>
            <person name="Hammon N."/>
            <person name="Israni S."/>
            <person name="Dalin E."/>
            <person name="Tice H."/>
            <person name="Pitluck S."/>
            <person name="Chain P."/>
            <person name="Malfatti S."/>
            <person name="Shin M."/>
            <person name="Vergez L."/>
            <person name="Schmutz J."/>
            <person name="Larimer F."/>
            <person name="Land M."/>
            <person name="Hauser L."/>
            <person name="Pelletier D.A."/>
            <person name="Kyrpides N."/>
            <person name="Anderson I."/>
            <person name="Oda Y."/>
            <person name="Harwood C.S."/>
            <person name="Richardson P."/>
        </authorList>
    </citation>
    <scope>NUCLEOTIDE SEQUENCE [LARGE SCALE GENOMIC DNA]</scope>
    <source>
        <strain>BisB18</strain>
    </source>
</reference>
<keyword id="KW-1003">Cell membrane</keyword>
<keyword id="KW-0472">Membrane</keyword>
<keyword id="KW-0812">Transmembrane</keyword>
<keyword id="KW-1133">Transmembrane helix</keyword>
<protein>
    <recommendedName>
        <fullName evidence="1">UPF0391 membrane protein RPC_2356</fullName>
    </recommendedName>
</protein>
<accession>Q215M7</accession>
<name>Y2356_RHOPB</name>
<feature type="chain" id="PRO_0000256778" description="UPF0391 membrane protein RPC_2356">
    <location>
        <begin position="1"/>
        <end position="57"/>
    </location>
</feature>
<feature type="transmembrane region" description="Helical" evidence="1">
    <location>
        <begin position="6"/>
        <end position="26"/>
    </location>
</feature>
<feature type="transmembrane region" description="Helical" evidence="1">
    <location>
        <begin position="35"/>
        <end position="55"/>
    </location>
</feature>
<proteinExistence type="inferred from homology"/>
<comment type="subcellular location">
    <subcellularLocation>
        <location evidence="1">Cell membrane</location>
        <topology evidence="1">Multi-pass membrane protein</topology>
    </subcellularLocation>
</comment>
<comment type="similarity">
    <text evidence="1">Belongs to the UPF0391 family.</text>
</comment>
<organism>
    <name type="scientific">Rhodopseudomonas palustris (strain BisB18)</name>
    <dbReference type="NCBI Taxonomy" id="316056"/>
    <lineage>
        <taxon>Bacteria</taxon>
        <taxon>Pseudomonadati</taxon>
        <taxon>Pseudomonadota</taxon>
        <taxon>Alphaproteobacteria</taxon>
        <taxon>Hyphomicrobiales</taxon>
        <taxon>Nitrobacteraceae</taxon>
        <taxon>Rhodopseudomonas</taxon>
    </lineage>
</organism>
<gene>
    <name type="ordered locus">RPC_2356</name>
</gene>